<dbReference type="EMBL" id="AM167904">
    <property type="protein sequence ID" value="CAJ50839.1"/>
    <property type="molecule type" value="Genomic_DNA"/>
</dbReference>
<dbReference type="RefSeq" id="WP_012418866.1">
    <property type="nucleotide sequence ID" value="NC_010645.1"/>
</dbReference>
<dbReference type="SMR" id="Q2KU21"/>
<dbReference type="STRING" id="360910.BAV3229"/>
<dbReference type="GeneID" id="92933513"/>
<dbReference type="KEGG" id="bav:BAV3229"/>
<dbReference type="eggNOG" id="COG1651">
    <property type="taxonomic scope" value="Bacteria"/>
</dbReference>
<dbReference type="HOGENOM" id="CLU_083593_1_0_4"/>
<dbReference type="OrthoDB" id="12976at2"/>
<dbReference type="Proteomes" id="UP000001977">
    <property type="component" value="Chromosome"/>
</dbReference>
<dbReference type="GO" id="GO:0042597">
    <property type="term" value="C:periplasmic space"/>
    <property type="evidence" value="ECO:0007669"/>
    <property type="project" value="UniProtKB-SubCell"/>
</dbReference>
<dbReference type="CDD" id="cd03020">
    <property type="entry name" value="DsbA_DsbC_DsbG"/>
    <property type="match status" value="1"/>
</dbReference>
<dbReference type="Gene3D" id="3.10.450.70">
    <property type="entry name" value="Disulphide bond isomerase, DsbC/G, N-terminal"/>
    <property type="match status" value="1"/>
</dbReference>
<dbReference type="Gene3D" id="3.40.30.10">
    <property type="entry name" value="Glutaredoxin"/>
    <property type="match status" value="1"/>
</dbReference>
<dbReference type="InterPro" id="IPR033954">
    <property type="entry name" value="DiS-bond_Isoase_DsbC/G"/>
</dbReference>
<dbReference type="InterPro" id="IPR018950">
    <property type="entry name" value="DiS-bond_isomerase_DsbC/G_N"/>
</dbReference>
<dbReference type="InterPro" id="IPR009094">
    <property type="entry name" value="DiS-bond_isomerase_DsbC/G_N_sf"/>
</dbReference>
<dbReference type="InterPro" id="IPR051470">
    <property type="entry name" value="Thiol:disulfide_interchange"/>
</dbReference>
<dbReference type="InterPro" id="IPR012336">
    <property type="entry name" value="Thioredoxin-like_fold"/>
</dbReference>
<dbReference type="InterPro" id="IPR036249">
    <property type="entry name" value="Thioredoxin-like_sf"/>
</dbReference>
<dbReference type="InterPro" id="IPR017937">
    <property type="entry name" value="Thioredoxin_CS"/>
</dbReference>
<dbReference type="PANTHER" id="PTHR35272:SF3">
    <property type="entry name" value="THIOL:DISULFIDE INTERCHANGE PROTEIN DSBC"/>
    <property type="match status" value="1"/>
</dbReference>
<dbReference type="PANTHER" id="PTHR35272">
    <property type="entry name" value="THIOL:DISULFIDE INTERCHANGE PROTEIN DSBC-RELATED"/>
    <property type="match status" value="1"/>
</dbReference>
<dbReference type="Pfam" id="PF10411">
    <property type="entry name" value="DsbC_N"/>
    <property type="match status" value="1"/>
</dbReference>
<dbReference type="Pfam" id="PF13098">
    <property type="entry name" value="Thioredoxin_2"/>
    <property type="match status" value="1"/>
</dbReference>
<dbReference type="SUPFAM" id="SSF54423">
    <property type="entry name" value="DsbC/DsbG N-terminal domain-like"/>
    <property type="match status" value="1"/>
</dbReference>
<dbReference type="SUPFAM" id="SSF52833">
    <property type="entry name" value="Thioredoxin-like"/>
    <property type="match status" value="1"/>
</dbReference>
<dbReference type="PROSITE" id="PS00194">
    <property type="entry name" value="THIOREDOXIN_1"/>
    <property type="match status" value="1"/>
</dbReference>
<sequence length="277" mass="30568">MKARIIVLLASLLCANAYAQNGYSASTAQSSGQNDTVYSTNQVGKPATNGGKVYSTTQVQPPDPVTDAVRKRFQLRFQDLKIGVVRPTPYGLFEVQLGGDMFYTDKDVSWVMKGPLIDAATRRDVTRENLEKLSAVSFSELPLDLAIKQVKGQGKHRIAIFEDPNCGYCKQLRHTLKEMDDVTIYTFLYPILSPDSTVKARDVLCAADPGKVLDAWMLEGKPPAPAHCRAPIEELVALGEKLRVRGTPTLFFEDNTRAAGVLPPAQLRERLTRNVSQ</sequence>
<organism>
    <name type="scientific">Bordetella avium (strain 197N)</name>
    <dbReference type="NCBI Taxonomy" id="360910"/>
    <lineage>
        <taxon>Bacteria</taxon>
        <taxon>Pseudomonadati</taxon>
        <taxon>Pseudomonadota</taxon>
        <taxon>Betaproteobacteria</taxon>
        <taxon>Burkholderiales</taxon>
        <taxon>Alcaligenaceae</taxon>
        <taxon>Bordetella</taxon>
    </lineage>
</organism>
<name>DSBC_BORA1</name>
<proteinExistence type="inferred from homology"/>
<evidence type="ECO:0000250" key="1"/>
<evidence type="ECO:0000255" key="2"/>
<evidence type="ECO:0000305" key="3"/>
<keyword id="KW-1015">Disulfide bond</keyword>
<keyword id="KW-0574">Periplasm</keyword>
<keyword id="KW-0676">Redox-active center</keyword>
<keyword id="KW-1185">Reference proteome</keyword>
<keyword id="KW-0732">Signal</keyword>
<reference key="1">
    <citation type="journal article" date="2006" name="J. Bacteriol.">
        <title>Comparison of the genome sequence of the poultry pathogen Bordetella avium with those of B. bronchiseptica, B. pertussis, and B. parapertussis reveals extensive diversity in surface structures associated with host interaction.</title>
        <authorList>
            <person name="Sebaihia M."/>
            <person name="Preston A."/>
            <person name="Maskell D.J."/>
            <person name="Kuzmiak H."/>
            <person name="Connell T.D."/>
            <person name="King N.D."/>
            <person name="Orndorff P.E."/>
            <person name="Miyamoto D.M."/>
            <person name="Thomson N.R."/>
            <person name="Harris D."/>
            <person name="Goble A."/>
            <person name="Lord A."/>
            <person name="Murphy L."/>
            <person name="Quail M.A."/>
            <person name="Rutter S."/>
            <person name="Squares R."/>
            <person name="Squares S."/>
            <person name="Woodward J."/>
            <person name="Parkhill J."/>
            <person name="Temple L.M."/>
        </authorList>
    </citation>
    <scope>NUCLEOTIDE SEQUENCE [LARGE SCALE GENOMIC DNA]</scope>
    <source>
        <strain>197N</strain>
    </source>
</reference>
<gene>
    <name type="primary">dsbC</name>
    <name type="ordered locus">BAV3229</name>
</gene>
<accession>Q2KU21</accession>
<protein>
    <recommendedName>
        <fullName>Probable thiol:disulfide interchange protein DsbC</fullName>
    </recommendedName>
</protein>
<feature type="signal peptide" evidence="2">
    <location>
        <begin position="1"/>
        <end position="19"/>
    </location>
</feature>
<feature type="chain" id="PRO_0000245642" description="Probable thiol:disulfide interchange protein DsbC">
    <location>
        <begin position="20"/>
        <end position="277"/>
    </location>
</feature>
<feature type="disulfide bond" description="Redox-active" evidence="1">
    <location>
        <begin position="166"/>
        <end position="169"/>
    </location>
</feature>
<feature type="disulfide bond" evidence="1">
    <location>
        <begin position="205"/>
        <end position="228"/>
    </location>
</feature>
<comment type="function">
    <text evidence="1">Required for disulfide bond formation in some periplasmic proteins. Acts by transferring its disulfide bond to other proteins and is reduced in the process (By similarity).</text>
</comment>
<comment type="subcellular location">
    <subcellularLocation>
        <location evidence="1">Periplasm</location>
    </subcellularLocation>
</comment>
<comment type="similarity">
    <text evidence="3">Belongs to the thioredoxin family. DsbC subfamily.</text>
</comment>